<proteinExistence type="inferred from homology"/>
<comment type="function">
    <text>Core component of nucleosome. Nucleosomes wrap and compact DNA into chromatin, limiting DNA accessibility to the cellular machineries which require DNA as a template. Histones thereby play a central role in transcription regulation, DNA repair, DNA replication and chromosomal stability. DNA accessibility is regulated via a complex set of post-translational modifications of histones, also called histone code, and nucleosome remodeling.</text>
</comment>
<comment type="subunit">
    <text>The nucleosome is a histone octamer containing two molecules each of H2A, H2B, H3 and H4 assembled in one H3-H4 heterotetramer and two H2A-H2B heterodimers. The octamer wraps approximately 147 bp of DNA.</text>
</comment>
<comment type="subcellular location">
    <subcellularLocation>
        <location evidence="1">Nucleus</location>
    </subcellularLocation>
    <subcellularLocation>
        <location evidence="1">Chromosome</location>
    </subcellularLocation>
</comment>
<comment type="domain">
    <text>Contains 2 SPKK motifs which may interact with the minor groove of A/T-rich DNA sites. Phosphorylation of this motif may regulate DNA binding. This motif is reiterated in both termini of histone H1 and in the N-terminus of sea urchin histones H2B, but its presence in the C-terminus seems to be unique to plant H2A.</text>
</comment>
<comment type="similarity">
    <text evidence="3">Belongs to the histone H2A family.</text>
</comment>
<evidence type="ECO:0000250" key="1"/>
<evidence type="ECO:0000256" key="2">
    <source>
        <dbReference type="SAM" id="MobiDB-lite"/>
    </source>
</evidence>
<evidence type="ECO:0000305" key="3"/>
<accession>A2WQG7</accession>
<reference key="1">
    <citation type="journal article" date="2005" name="PLoS Biol.">
        <title>The genomes of Oryza sativa: a history of duplications.</title>
        <authorList>
            <person name="Yu J."/>
            <person name="Wang J."/>
            <person name="Lin W."/>
            <person name="Li S."/>
            <person name="Li H."/>
            <person name="Zhou J."/>
            <person name="Ni P."/>
            <person name="Dong W."/>
            <person name="Hu S."/>
            <person name="Zeng C."/>
            <person name="Zhang J."/>
            <person name="Zhang Y."/>
            <person name="Li R."/>
            <person name="Xu Z."/>
            <person name="Li S."/>
            <person name="Li X."/>
            <person name="Zheng H."/>
            <person name="Cong L."/>
            <person name="Lin L."/>
            <person name="Yin J."/>
            <person name="Geng J."/>
            <person name="Li G."/>
            <person name="Shi J."/>
            <person name="Liu J."/>
            <person name="Lv H."/>
            <person name="Li J."/>
            <person name="Wang J."/>
            <person name="Deng Y."/>
            <person name="Ran L."/>
            <person name="Shi X."/>
            <person name="Wang X."/>
            <person name="Wu Q."/>
            <person name="Li C."/>
            <person name="Ren X."/>
            <person name="Wang J."/>
            <person name="Wang X."/>
            <person name="Li D."/>
            <person name="Liu D."/>
            <person name="Zhang X."/>
            <person name="Ji Z."/>
            <person name="Zhao W."/>
            <person name="Sun Y."/>
            <person name="Zhang Z."/>
            <person name="Bao J."/>
            <person name="Han Y."/>
            <person name="Dong L."/>
            <person name="Ji J."/>
            <person name="Chen P."/>
            <person name="Wu S."/>
            <person name="Liu J."/>
            <person name="Xiao Y."/>
            <person name="Bu D."/>
            <person name="Tan J."/>
            <person name="Yang L."/>
            <person name="Ye C."/>
            <person name="Zhang J."/>
            <person name="Xu J."/>
            <person name="Zhou Y."/>
            <person name="Yu Y."/>
            <person name="Zhang B."/>
            <person name="Zhuang S."/>
            <person name="Wei H."/>
            <person name="Liu B."/>
            <person name="Lei M."/>
            <person name="Yu H."/>
            <person name="Li Y."/>
            <person name="Xu H."/>
            <person name="Wei S."/>
            <person name="He X."/>
            <person name="Fang L."/>
            <person name="Zhang Z."/>
            <person name="Zhang Y."/>
            <person name="Huang X."/>
            <person name="Su Z."/>
            <person name="Tong W."/>
            <person name="Li J."/>
            <person name="Tong Z."/>
            <person name="Li S."/>
            <person name="Ye J."/>
            <person name="Wang L."/>
            <person name="Fang L."/>
            <person name="Lei T."/>
            <person name="Chen C.-S."/>
            <person name="Chen H.-C."/>
            <person name="Xu Z."/>
            <person name="Li H."/>
            <person name="Huang H."/>
            <person name="Zhang F."/>
            <person name="Xu H."/>
            <person name="Li N."/>
            <person name="Zhao C."/>
            <person name="Li S."/>
            <person name="Dong L."/>
            <person name="Huang Y."/>
            <person name="Li L."/>
            <person name="Xi Y."/>
            <person name="Qi Q."/>
            <person name="Li W."/>
            <person name="Zhang B."/>
            <person name="Hu W."/>
            <person name="Zhang Y."/>
            <person name="Tian X."/>
            <person name="Jiao Y."/>
            <person name="Liang X."/>
            <person name="Jin J."/>
            <person name="Gao L."/>
            <person name="Zheng W."/>
            <person name="Hao B."/>
            <person name="Liu S.-M."/>
            <person name="Wang W."/>
            <person name="Yuan L."/>
            <person name="Cao M."/>
            <person name="McDermott J."/>
            <person name="Samudrala R."/>
            <person name="Wang J."/>
            <person name="Wong G.K.-S."/>
            <person name="Yang H."/>
        </authorList>
    </citation>
    <scope>NUCLEOTIDE SEQUENCE [LARGE SCALE GENOMIC DNA]</scope>
    <source>
        <strain>cv. 93-11</strain>
    </source>
</reference>
<keyword id="KW-0158">Chromosome</keyword>
<keyword id="KW-0238">DNA-binding</keyword>
<keyword id="KW-0544">Nucleosome core</keyword>
<keyword id="KW-0539">Nucleus</keyword>
<keyword id="KW-1185">Reference proteome</keyword>
<name>H2A5_ORYSI</name>
<dbReference type="EMBL" id="CM000126">
    <property type="protein sequence ID" value="EAY74213.1"/>
    <property type="molecule type" value="Genomic_DNA"/>
</dbReference>
<dbReference type="EMBL" id="CM000128">
    <property type="protein sequence ID" value="EAY89478.1"/>
    <property type="molecule type" value="Genomic_DNA"/>
</dbReference>
<dbReference type="SMR" id="A2WQG7"/>
<dbReference type="STRING" id="39946.A2WQG7"/>
<dbReference type="EnsemblPlants" id="BGIOSGA003601-TA">
    <property type="protein sequence ID" value="BGIOSGA003601-PA"/>
    <property type="gene ID" value="BGIOSGA003601"/>
</dbReference>
<dbReference type="EnsemblPlants" id="BGIOSGA010990-TA">
    <property type="protein sequence ID" value="BGIOSGA010990-PA"/>
    <property type="gene ID" value="BGIOSGA010990"/>
</dbReference>
<dbReference type="EnsemblPlants" id="OsGoSa_01g0018040.01">
    <property type="protein sequence ID" value="OsGoSa_01g0018040.01"/>
    <property type="gene ID" value="OsGoSa_01g0018040"/>
</dbReference>
<dbReference type="EnsemblPlants" id="OsGoSa_03g0012850.01">
    <property type="protein sequence ID" value="OsGoSa_03g0012850.01"/>
    <property type="gene ID" value="OsGoSa_03g0012850"/>
</dbReference>
<dbReference type="EnsemblPlants" id="OsIR64_01g0017950.01">
    <property type="protein sequence ID" value="OsIR64_01g0017950.01"/>
    <property type="gene ID" value="OsIR64_01g0017950"/>
</dbReference>
<dbReference type="EnsemblPlants" id="OsIR64_03g0012620.01">
    <property type="protein sequence ID" value="OsIR64_03g0012620.01"/>
    <property type="gene ID" value="OsIR64_03g0012620"/>
</dbReference>
<dbReference type="EnsemblPlants" id="OsKYG_01g0017790.01">
    <property type="protein sequence ID" value="OsKYG_01g0017790.01"/>
    <property type="gene ID" value="OsKYG_01g0017790"/>
</dbReference>
<dbReference type="EnsemblPlants" id="OsKYG_03g0012800.01">
    <property type="protein sequence ID" value="OsKYG_03g0012800.01"/>
    <property type="gene ID" value="OsKYG_03g0012800"/>
</dbReference>
<dbReference type="EnsemblPlants" id="OsLaMu_01g0017690.01">
    <property type="protein sequence ID" value="OsLaMu_01g0017690.01"/>
    <property type="gene ID" value="OsLaMu_01g0017690"/>
</dbReference>
<dbReference type="EnsemblPlants" id="OsLaMu_03g0012700.01">
    <property type="protein sequence ID" value="OsLaMu_03g0012700.01"/>
    <property type="gene ID" value="OsLaMu_03g0012700"/>
</dbReference>
<dbReference type="EnsemblPlants" id="OsLima_01g0017840.01">
    <property type="protein sequence ID" value="OsLima_01g0017840.01"/>
    <property type="gene ID" value="OsLima_01g0017840"/>
</dbReference>
<dbReference type="EnsemblPlants" id="OsLima_03g0012780.01">
    <property type="protein sequence ID" value="OsLima_03g0012780.01"/>
    <property type="gene ID" value="OsLima_03g0012780"/>
</dbReference>
<dbReference type="EnsemblPlants" id="OsLiXu_01g0017780.01">
    <property type="protein sequence ID" value="OsLiXu_01g0017780.01"/>
    <property type="gene ID" value="OsLiXu_01g0017780"/>
</dbReference>
<dbReference type="EnsemblPlants" id="OsLiXu_03g0012730.01">
    <property type="protein sequence ID" value="OsLiXu_03g0012730.01"/>
    <property type="gene ID" value="OsLiXu_03g0012730"/>
</dbReference>
<dbReference type="EnsemblPlants" id="OsMH63_01G018250_01">
    <property type="protein sequence ID" value="OsMH63_01G018250_01"/>
    <property type="gene ID" value="OsMH63_01G018250"/>
</dbReference>
<dbReference type="EnsemblPlants" id="OsMH63_03G012740_01">
    <property type="protein sequence ID" value="OsMH63_03G012740_01"/>
    <property type="gene ID" value="OsMH63_03G012740"/>
</dbReference>
<dbReference type="EnsemblPlants" id="OsPr106_01g0017820.01">
    <property type="protein sequence ID" value="OsPr106_01g0017820.01"/>
    <property type="gene ID" value="OsPr106_01g0017820"/>
</dbReference>
<dbReference type="EnsemblPlants" id="OsPr106_03g0012720.01">
    <property type="protein sequence ID" value="OsPr106_03g0012720.01"/>
    <property type="gene ID" value="OsPr106_03g0012720"/>
</dbReference>
<dbReference type="EnsemblPlants" id="OsZS97_01G017700_01">
    <property type="protein sequence ID" value="OsZS97_01G017700_01"/>
    <property type="gene ID" value="OsZS97_01G017700"/>
</dbReference>
<dbReference type="EnsemblPlants" id="OsZS97_03G012710_01">
    <property type="protein sequence ID" value="OsZS97_03G012710_01"/>
    <property type="gene ID" value="OsZS97_03G012710"/>
</dbReference>
<dbReference type="Gramene" id="BGIOSGA003601-TA">
    <property type="protein sequence ID" value="BGIOSGA003601-PA"/>
    <property type="gene ID" value="BGIOSGA003601"/>
</dbReference>
<dbReference type="Gramene" id="BGIOSGA010990-TA">
    <property type="protein sequence ID" value="BGIOSGA010990-PA"/>
    <property type="gene ID" value="BGIOSGA010990"/>
</dbReference>
<dbReference type="Gramene" id="OsGoSa_01g0018040.01">
    <property type="protein sequence ID" value="OsGoSa_01g0018040.01"/>
    <property type="gene ID" value="OsGoSa_01g0018040"/>
</dbReference>
<dbReference type="Gramene" id="OsGoSa_03g0012850.01">
    <property type="protein sequence ID" value="OsGoSa_03g0012850.01"/>
    <property type="gene ID" value="OsGoSa_03g0012850"/>
</dbReference>
<dbReference type="Gramene" id="OsIR64_01g0017950.01">
    <property type="protein sequence ID" value="OsIR64_01g0017950.01"/>
    <property type="gene ID" value="OsIR64_01g0017950"/>
</dbReference>
<dbReference type="Gramene" id="OsIR64_03g0012620.01">
    <property type="protein sequence ID" value="OsIR64_03g0012620.01"/>
    <property type="gene ID" value="OsIR64_03g0012620"/>
</dbReference>
<dbReference type="Gramene" id="OsKYG_01g0017790.01">
    <property type="protein sequence ID" value="OsKYG_01g0017790.01"/>
    <property type="gene ID" value="OsKYG_01g0017790"/>
</dbReference>
<dbReference type="Gramene" id="OsKYG_03g0012800.01">
    <property type="protein sequence ID" value="OsKYG_03g0012800.01"/>
    <property type="gene ID" value="OsKYG_03g0012800"/>
</dbReference>
<dbReference type="Gramene" id="OsLaMu_01g0017690.01">
    <property type="protein sequence ID" value="OsLaMu_01g0017690.01"/>
    <property type="gene ID" value="OsLaMu_01g0017690"/>
</dbReference>
<dbReference type="Gramene" id="OsLaMu_03g0012700.01">
    <property type="protein sequence ID" value="OsLaMu_03g0012700.01"/>
    <property type="gene ID" value="OsLaMu_03g0012700"/>
</dbReference>
<dbReference type="Gramene" id="OsLima_01g0017840.01">
    <property type="protein sequence ID" value="OsLima_01g0017840.01"/>
    <property type="gene ID" value="OsLima_01g0017840"/>
</dbReference>
<dbReference type="Gramene" id="OsLima_03g0012780.01">
    <property type="protein sequence ID" value="OsLima_03g0012780.01"/>
    <property type="gene ID" value="OsLima_03g0012780"/>
</dbReference>
<dbReference type="Gramene" id="OsLiXu_01g0017780.01">
    <property type="protein sequence ID" value="OsLiXu_01g0017780.01"/>
    <property type="gene ID" value="OsLiXu_01g0017780"/>
</dbReference>
<dbReference type="Gramene" id="OsLiXu_03g0012730.01">
    <property type="protein sequence ID" value="OsLiXu_03g0012730.01"/>
    <property type="gene ID" value="OsLiXu_03g0012730"/>
</dbReference>
<dbReference type="Gramene" id="OsMH63_01G018250_01">
    <property type="protein sequence ID" value="OsMH63_01G018250_01"/>
    <property type="gene ID" value="OsMH63_01G018250"/>
</dbReference>
<dbReference type="Gramene" id="OsMH63_03G012740_01">
    <property type="protein sequence ID" value="OsMH63_03G012740_01"/>
    <property type="gene ID" value="OsMH63_03G012740"/>
</dbReference>
<dbReference type="Gramene" id="OsPr106_01g0017820.01">
    <property type="protein sequence ID" value="OsPr106_01g0017820.01"/>
    <property type="gene ID" value="OsPr106_01g0017820"/>
</dbReference>
<dbReference type="Gramene" id="OsPr106_03g0012720.01">
    <property type="protein sequence ID" value="OsPr106_03g0012720.01"/>
    <property type="gene ID" value="OsPr106_03g0012720"/>
</dbReference>
<dbReference type="Gramene" id="OsZS97_01G017700_01">
    <property type="protein sequence ID" value="OsZS97_01G017700_01"/>
    <property type="gene ID" value="OsZS97_01G017700"/>
</dbReference>
<dbReference type="Gramene" id="OsZS97_03G012710_01">
    <property type="protein sequence ID" value="OsZS97_03G012710_01"/>
    <property type="gene ID" value="OsZS97_03G012710"/>
</dbReference>
<dbReference type="HOGENOM" id="CLU_062828_1_1_1"/>
<dbReference type="OMA" id="TASRRCK"/>
<dbReference type="OrthoDB" id="10253031at2759"/>
<dbReference type="Proteomes" id="UP000007015">
    <property type="component" value="Chromosome 1"/>
</dbReference>
<dbReference type="Proteomes" id="UP000007015">
    <property type="component" value="Chromosome 3"/>
</dbReference>
<dbReference type="GO" id="GO:0000786">
    <property type="term" value="C:nucleosome"/>
    <property type="evidence" value="ECO:0007669"/>
    <property type="project" value="UniProtKB-KW"/>
</dbReference>
<dbReference type="GO" id="GO:0005634">
    <property type="term" value="C:nucleus"/>
    <property type="evidence" value="ECO:0007669"/>
    <property type="project" value="UniProtKB-SubCell"/>
</dbReference>
<dbReference type="GO" id="GO:0003677">
    <property type="term" value="F:DNA binding"/>
    <property type="evidence" value="ECO:0007669"/>
    <property type="project" value="UniProtKB-KW"/>
</dbReference>
<dbReference type="GO" id="GO:0046982">
    <property type="term" value="F:protein heterodimerization activity"/>
    <property type="evidence" value="ECO:0007669"/>
    <property type="project" value="InterPro"/>
</dbReference>
<dbReference type="GO" id="GO:0030527">
    <property type="term" value="F:structural constituent of chromatin"/>
    <property type="evidence" value="ECO:0007669"/>
    <property type="project" value="InterPro"/>
</dbReference>
<dbReference type="CDD" id="cd00074">
    <property type="entry name" value="HFD_H2A"/>
    <property type="match status" value="1"/>
</dbReference>
<dbReference type="FunFam" id="1.10.20.10:FF:000026">
    <property type="entry name" value="Histone H2A"/>
    <property type="match status" value="1"/>
</dbReference>
<dbReference type="Gene3D" id="1.10.20.10">
    <property type="entry name" value="Histone, subunit A"/>
    <property type="match status" value="1"/>
</dbReference>
<dbReference type="InterPro" id="IPR009072">
    <property type="entry name" value="Histone-fold"/>
</dbReference>
<dbReference type="InterPro" id="IPR002119">
    <property type="entry name" value="Histone_H2A"/>
</dbReference>
<dbReference type="InterPro" id="IPR007125">
    <property type="entry name" value="Histone_H2A/H2B/H3"/>
</dbReference>
<dbReference type="InterPro" id="IPR032454">
    <property type="entry name" value="Histone_H2A_C"/>
</dbReference>
<dbReference type="InterPro" id="IPR032458">
    <property type="entry name" value="Histone_H2A_CS"/>
</dbReference>
<dbReference type="PANTHER" id="PTHR23430">
    <property type="entry name" value="HISTONE H2A"/>
    <property type="match status" value="1"/>
</dbReference>
<dbReference type="Pfam" id="PF00125">
    <property type="entry name" value="Histone"/>
    <property type="match status" value="1"/>
</dbReference>
<dbReference type="Pfam" id="PF16211">
    <property type="entry name" value="Histone_H2A_C"/>
    <property type="match status" value="1"/>
</dbReference>
<dbReference type="PRINTS" id="PR00620">
    <property type="entry name" value="HISTONEH2A"/>
</dbReference>
<dbReference type="SMART" id="SM00414">
    <property type="entry name" value="H2A"/>
    <property type="match status" value="1"/>
</dbReference>
<dbReference type="SUPFAM" id="SSF47113">
    <property type="entry name" value="Histone-fold"/>
    <property type="match status" value="1"/>
</dbReference>
<dbReference type="PROSITE" id="PS00046">
    <property type="entry name" value="HISTONE_H2A"/>
    <property type="match status" value="1"/>
</dbReference>
<gene>
    <name type="ORF">OsI_002060</name>
</gene>
<gene>
    <name type="ORF">OsI_010711</name>
</gene>
<protein>
    <recommendedName>
        <fullName>Probable histone H2A.5</fullName>
    </recommendedName>
</protein>
<sequence length="159" mass="16401">MDAAGAGAGGKLKKGAAGRKAGGPRKKAVSRSVKAGLQFPVGRIGRYLKKGRYAQRIGTGAPVYLAAVLEYLAAEVLELAGNAARDNKKNRIIPRHVLLAIRNDEELGKLLAGVTIAHGGVLPNINPVLLPKKTAEKAAAAGKEAKSPKKAAGKSPKKA</sequence>
<organism>
    <name type="scientific">Oryza sativa subsp. indica</name>
    <name type="common">Rice</name>
    <dbReference type="NCBI Taxonomy" id="39946"/>
    <lineage>
        <taxon>Eukaryota</taxon>
        <taxon>Viridiplantae</taxon>
        <taxon>Streptophyta</taxon>
        <taxon>Embryophyta</taxon>
        <taxon>Tracheophyta</taxon>
        <taxon>Spermatophyta</taxon>
        <taxon>Magnoliopsida</taxon>
        <taxon>Liliopsida</taxon>
        <taxon>Poales</taxon>
        <taxon>Poaceae</taxon>
        <taxon>BOP clade</taxon>
        <taxon>Oryzoideae</taxon>
        <taxon>Oryzeae</taxon>
        <taxon>Oryzinae</taxon>
        <taxon>Oryza</taxon>
        <taxon>Oryza sativa</taxon>
    </lineage>
</organism>
<feature type="chain" id="PRO_0000296123" description="Probable histone H2A.5">
    <location>
        <begin position="1"/>
        <end position="159"/>
    </location>
</feature>
<feature type="region of interest" description="Disordered" evidence="2">
    <location>
        <begin position="1"/>
        <end position="29"/>
    </location>
</feature>
<feature type="region of interest" description="Disordered" evidence="2">
    <location>
        <begin position="136"/>
        <end position="159"/>
    </location>
</feature>
<feature type="short sequence motif" description="SPKK motif 1">
    <location>
        <begin position="147"/>
        <end position="150"/>
    </location>
</feature>
<feature type="short sequence motif" description="SPKK motif 2">
    <location>
        <begin position="155"/>
        <end position="158"/>
    </location>
</feature>
<feature type="compositionally biased region" description="Gly residues" evidence="2">
    <location>
        <begin position="1"/>
        <end position="10"/>
    </location>
</feature>
<feature type="compositionally biased region" description="Basic residues" evidence="2">
    <location>
        <begin position="11"/>
        <end position="29"/>
    </location>
</feature>
<feature type="compositionally biased region" description="Basic residues" evidence="2">
    <location>
        <begin position="148"/>
        <end position="159"/>
    </location>
</feature>